<proteinExistence type="evidence at protein level"/>
<accession>Q8BK72</accession>
<accession>E9QKZ5</accession>
<sequence>MAAPMVRCGMLLARRLDASRLCLAGKRCLLSAAYVDSHQWEAREKEEYHLADLASLMDKAYERKLPVSSLSISRFVDNIASREDLDSAEYYLYKFRHSPNCWYLRDWTIHSWIRQCLKYGAQDKALYTLVNKVQYGIFPDNFTFNLLMDYFIKKGNYKDALSVVFEIMMQEAFDVPSTQFLSLYVLYRCLAEKTELTWEEERDFGASLLLSGLKQRNTVGLSSQLYGYALLGKVELQRGVRAVYHGMPLMWTPGYLDRALQVMERVASSPEDLKLGREVLDVLDGVLKVVTSPDVQTSEAQPQEGEDGLGSANLVEQLDTEEPEQSKLPRYLERFQASRSKLQELNRVESESLLTLTTQLVKEKLPACEAEDLATYEQKLREWHLERVQLIQREQEQREKAKQEYQALSAAEKAA</sequence>
<gene>
    <name evidence="6" type="primary">Mrps27</name>
</gene>
<name>RT27_MOUSE</name>
<reference evidence="5" key="1">
    <citation type="journal article" date="2005" name="Science">
        <title>The transcriptional landscape of the mammalian genome.</title>
        <authorList>
            <person name="Carninci P."/>
            <person name="Kasukawa T."/>
            <person name="Katayama S."/>
            <person name="Gough J."/>
            <person name="Frith M.C."/>
            <person name="Maeda N."/>
            <person name="Oyama R."/>
            <person name="Ravasi T."/>
            <person name="Lenhard B."/>
            <person name="Wells C."/>
            <person name="Kodzius R."/>
            <person name="Shimokawa K."/>
            <person name="Bajic V.B."/>
            <person name="Brenner S.E."/>
            <person name="Batalov S."/>
            <person name="Forrest A.R."/>
            <person name="Zavolan M."/>
            <person name="Davis M.J."/>
            <person name="Wilming L.G."/>
            <person name="Aidinis V."/>
            <person name="Allen J.E."/>
            <person name="Ambesi-Impiombato A."/>
            <person name="Apweiler R."/>
            <person name="Aturaliya R.N."/>
            <person name="Bailey T.L."/>
            <person name="Bansal M."/>
            <person name="Baxter L."/>
            <person name="Beisel K.W."/>
            <person name="Bersano T."/>
            <person name="Bono H."/>
            <person name="Chalk A.M."/>
            <person name="Chiu K.P."/>
            <person name="Choudhary V."/>
            <person name="Christoffels A."/>
            <person name="Clutterbuck D.R."/>
            <person name="Crowe M.L."/>
            <person name="Dalla E."/>
            <person name="Dalrymple B.P."/>
            <person name="de Bono B."/>
            <person name="Della Gatta G."/>
            <person name="di Bernardo D."/>
            <person name="Down T."/>
            <person name="Engstrom P."/>
            <person name="Fagiolini M."/>
            <person name="Faulkner G."/>
            <person name="Fletcher C.F."/>
            <person name="Fukushima T."/>
            <person name="Furuno M."/>
            <person name="Futaki S."/>
            <person name="Gariboldi M."/>
            <person name="Georgii-Hemming P."/>
            <person name="Gingeras T.R."/>
            <person name="Gojobori T."/>
            <person name="Green R.E."/>
            <person name="Gustincich S."/>
            <person name="Harbers M."/>
            <person name="Hayashi Y."/>
            <person name="Hensch T.K."/>
            <person name="Hirokawa N."/>
            <person name="Hill D."/>
            <person name="Huminiecki L."/>
            <person name="Iacono M."/>
            <person name="Ikeo K."/>
            <person name="Iwama A."/>
            <person name="Ishikawa T."/>
            <person name="Jakt M."/>
            <person name="Kanapin A."/>
            <person name="Katoh M."/>
            <person name="Kawasawa Y."/>
            <person name="Kelso J."/>
            <person name="Kitamura H."/>
            <person name="Kitano H."/>
            <person name="Kollias G."/>
            <person name="Krishnan S.P."/>
            <person name="Kruger A."/>
            <person name="Kummerfeld S.K."/>
            <person name="Kurochkin I.V."/>
            <person name="Lareau L.F."/>
            <person name="Lazarevic D."/>
            <person name="Lipovich L."/>
            <person name="Liu J."/>
            <person name="Liuni S."/>
            <person name="McWilliam S."/>
            <person name="Madan Babu M."/>
            <person name="Madera M."/>
            <person name="Marchionni L."/>
            <person name="Matsuda H."/>
            <person name="Matsuzawa S."/>
            <person name="Miki H."/>
            <person name="Mignone F."/>
            <person name="Miyake S."/>
            <person name="Morris K."/>
            <person name="Mottagui-Tabar S."/>
            <person name="Mulder N."/>
            <person name="Nakano N."/>
            <person name="Nakauchi H."/>
            <person name="Ng P."/>
            <person name="Nilsson R."/>
            <person name="Nishiguchi S."/>
            <person name="Nishikawa S."/>
            <person name="Nori F."/>
            <person name="Ohara O."/>
            <person name="Okazaki Y."/>
            <person name="Orlando V."/>
            <person name="Pang K.C."/>
            <person name="Pavan W.J."/>
            <person name="Pavesi G."/>
            <person name="Pesole G."/>
            <person name="Petrovsky N."/>
            <person name="Piazza S."/>
            <person name="Reed J."/>
            <person name="Reid J.F."/>
            <person name="Ring B.Z."/>
            <person name="Ringwald M."/>
            <person name="Rost B."/>
            <person name="Ruan Y."/>
            <person name="Salzberg S.L."/>
            <person name="Sandelin A."/>
            <person name="Schneider C."/>
            <person name="Schoenbach C."/>
            <person name="Sekiguchi K."/>
            <person name="Semple C.A."/>
            <person name="Seno S."/>
            <person name="Sessa L."/>
            <person name="Sheng Y."/>
            <person name="Shibata Y."/>
            <person name="Shimada H."/>
            <person name="Shimada K."/>
            <person name="Silva D."/>
            <person name="Sinclair B."/>
            <person name="Sperling S."/>
            <person name="Stupka E."/>
            <person name="Sugiura K."/>
            <person name="Sultana R."/>
            <person name="Takenaka Y."/>
            <person name="Taki K."/>
            <person name="Tammoja K."/>
            <person name="Tan S.L."/>
            <person name="Tang S."/>
            <person name="Taylor M.S."/>
            <person name="Tegner J."/>
            <person name="Teichmann S.A."/>
            <person name="Ueda H.R."/>
            <person name="van Nimwegen E."/>
            <person name="Verardo R."/>
            <person name="Wei C.L."/>
            <person name="Yagi K."/>
            <person name="Yamanishi H."/>
            <person name="Zabarovsky E."/>
            <person name="Zhu S."/>
            <person name="Zimmer A."/>
            <person name="Hide W."/>
            <person name="Bult C."/>
            <person name="Grimmond S.M."/>
            <person name="Teasdale R.D."/>
            <person name="Liu E.T."/>
            <person name="Brusic V."/>
            <person name="Quackenbush J."/>
            <person name="Wahlestedt C."/>
            <person name="Mattick J.S."/>
            <person name="Hume D.A."/>
            <person name="Kai C."/>
            <person name="Sasaki D."/>
            <person name="Tomaru Y."/>
            <person name="Fukuda S."/>
            <person name="Kanamori-Katayama M."/>
            <person name="Suzuki M."/>
            <person name="Aoki J."/>
            <person name="Arakawa T."/>
            <person name="Iida J."/>
            <person name="Imamura K."/>
            <person name="Itoh M."/>
            <person name="Kato T."/>
            <person name="Kawaji H."/>
            <person name="Kawagashira N."/>
            <person name="Kawashima T."/>
            <person name="Kojima M."/>
            <person name="Kondo S."/>
            <person name="Konno H."/>
            <person name="Nakano K."/>
            <person name="Ninomiya N."/>
            <person name="Nishio T."/>
            <person name="Okada M."/>
            <person name="Plessy C."/>
            <person name="Shibata K."/>
            <person name="Shiraki T."/>
            <person name="Suzuki S."/>
            <person name="Tagami M."/>
            <person name="Waki K."/>
            <person name="Watahiki A."/>
            <person name="Okamura-Oho Y."/>
            <person name="Suzuki H."/>
            <person name="Kawai J."/>
            <person name="Hayashizaki Y."/>
        </authorList>
    </citation>
    <scope>NUCLEOTIDE SEQUENCE [LARGE SCALE MRNA]</scope>
    <source>
        <strain evidence="5">C57BL/6J</strain>
        <tissue evidence="5">Embryo</tissue>
    </source>
</reference>
<reference key="2">
    <citation type="journal article" date="2009" name="PLoS Biol.">
        <title>Lineage-specific biology revealed by a finished genome assembly of the mouse.</title>
        <authorList>
            <person name="Church D.M."/>
            <person name="Goodstadt L."/>
            <person name="Hillier L.W."/>
            <person name="Zody M.C."/>
            <person name="Goldstein S."/>
            <person name="She X."/>
            <person name="Bult C.J."/>
            <person name="Agarwala R."/>
            <person name="Cherry J.L."/>
            <person name="DiCuccio M."/>
            <person name="Hlavina W."/>
            <person name="Kapustin Y."/>
            <person name="Meric P."/>
            <person name="Maglott D."/>
            <person name="Birtle Z."/>
            <person name="Marques A.C."/>
            <person name="Graves T."/>
            <person name="Zhou S."/>
            <person name="Teague B."/>
            <person name="Potamousis K."/>
            <person name="Churas C."/>
            <person name="Place M."/>
            <person name="Herschleb J."/>
            <person name="Runnheim R."/>
            <person name="Forrest D."/>
            <person name="Amos-Landgraf J."/>
            <person name="Schwartz D.C."/>
            <person name="Cheng Z."/>
            <person name="Lindblad-Toh K."/>
            <person name="Eichler E.E."/>
            <person name="Ponting C.P."/>
        </authorList>
    </citation>
    <scope>NUCLEOTIDE SEQUENCE [LARGE SCALE GENOMIC DNA]</scope>
    <source>
        <strain>C57BL/6J</strain>
    </source>
</reference>
<reference key="3">
    <citation type="journal article" date="2010" name="Cell">
        <title>A tissue-specific atlas of mouse protein phosphorylation and expression.</title>
        <authorList>
            <person name="Huttlin E.L."/>
            <person name="Jedrychowski M.P."/>
            <person name="Elias J.E."/>
            <person name="Goswami T."/>
            <person name="Rad R."/>
            <person name="Beausoleil S.A."/>
            <person name="Villen J."/>
            <person name="Haas W."/>
            <person name="Sowa M.E."/>
            <person name="Gygi S.P."/>
        </authorList>
    </citation>
    <scope>IDENTIFICATION BY MASS SPECTROMETRY [LARGE SCALE ANALYSIS]</scope>
    <source>
        <tissue>Brain</tissue>
        <tissue>Brown adipose tissue</tissue>
        <tissue>Heart</tissue>
        <tissue>Kidney</tissue>
        <tissue>Liver</tissue>
        <tissue>Pancreas</tissue>
        <tissue>Spleen</tissue>
        <tissue>Testis</tissue>
    </source>
</reference>
<reference key="4">
    <citation type="journal article" date="2019" name="FASEB J.">
        <title>Mettl17, a regulator of mitochondrial ribosomal RNA modifications, is required for the translation of mitochondrial coding genes.</title>
        <authorList>
            <person name="Shi Z."/>
            <person name="Xu S."/>
            <person name="Xing S."/>
            <person name="Yao K."/>
            <person name="Zhang L."/>
            <person name="Xue L."/>
            <person name="Zhou P."/>
            <person name="Wang M."/>
            <person name="Yan G."/>
            <person name="Yang P."/>
            <person name="Liu J."/>
            <person name="Hu Z."/>
            <person name="Lan F."/>
        </authorList>
    </citation>
    <scope>INTERACTION WITH METTL17</scope>
</reference>
<protein>
    <recommendedName>
        <fullName evidence="4">Small ribosomal subunit protein mS27</fullName>
    </recommendedName>
    <alternativeName>
        <fullName evidence="4">28S ribosomal protein S27, mitochondrial</fullName>
        <shortName>MRP-S27</shortName>
        <shortName>S27mt</shortName>
    </alternativeName>
    <alternativeName>
        <fullName evidence="6">Mitochondrial ribosomal protein S27</fullName>
    </alternativeName>
</protein>
<keyword id="KW-0002">3D-structure</keyword>
<keyword id="KW-0175">Coiled coil</keyword>
<keyword id="KW-0963">Cytoplasm</keyword>
<keyword id="KW-0496">Mitochondrion</keyword>
<keyword id="KW-1185">Reference proteome</keyword>
<keyword id="KW-0677">Repeat</keyword>
<keyword id="KW-0687">Ribonucleoprotein</keyword>
<keyword id="KW-0689">Ribosomal protein</keyword>
<keyword id="KW-0694">RNA-binding</keyword>
<keyword id="KW-0699">rRNA-binding</keyword>
<keyword id="KW-0809">Transit peptide</keyword>
<keyword id="KW-0810">Translation regulation</keyword>
<keyword id="KW-0820">tRNA-binding</keyword>
<evidence type="ECO:0000250" key="1">
    <source>
        <dbReference type="UniProtKB" id="Q92552"/>
    </source>
</evidence>
<evidence type="ECO:0000255" key="2"/>
<evidence type="ECO:0000269" key="3">
    <source>
    </source>
</evidence>
<evidence type="ECO:0000305" key="4"/>
<evidence type="ECO:0000312" key="5">
    <source>
        <dbReference type="EMBL" id="BAC36116.1"/>
    </source>
</evidence>
<evidence type="ECO:0000312" key="6">
    <source>
        <dbReference type="MGI" id="MGI:1919064"/>
    </source>
</evidence>
<feature type="transit peptide" description="Mitochondrion" evidence="2">
    <location>
        <begin position="1"/>
        <end position="17"/>
    </location>
</feature>
<feature type="chain" id="PRO_0000261586" description="Small ribosomal subunit protein mS27">
    <location>
        <begin position="18"/>
        <end position="415"/>
    </location>
</feature>
<feature type="repeat" description="PPR 1">
    <location>
        <begin position="105"/>
        <end position="139"/>
    </location>
</feature>
<feature type="repeat" description="PPR 2">
    <location>
        <begin position="140"/>
        <end position="175"/>
    </location>
</feature>
<feature type="coiled-coil region" evidence="2">
    <location>
        <begin position="369"/>
        <end position="415"/>
    </location>
</feature>
<feature type="sequence conflict" description="In Ref. 1; BAC36116." evidence="4" ref="1">
    <original>S</original>
    <variation>C</variation>
    <location>
        <position position="81"/>
    </location>
</feature>
<dbReference type="EMBL" id="AK076008">
    <property type="protein sequence ID" value="BAC36116.1"/>
    <property type="molecule type" value="mRNA"/>
</dbReference>
<dbReference type="EMBL" id="AC132347">
    <property type="status" value="NOT_ANNOTATED_CDS"/>
    <property type="molecule type" value="Genomic_DNA"/>
</dbReference>
<dbReference type="CCDS" id="CCDS26722.1"/>
<dbReference type="RefSeq" id="NP_776118.2">
    <property type="nucleotide sequence ID" value="NM_173757.3"/>
</dbReference>
<dbReference type="PDB" id="7PNT">
    <property type="method" value="EM"/>
    <property type="resolution" value="3.19 A"/>
    <property type="chains" value="V=1-415"/>
</dbReference>
<dbReference type="PDB" id="7PNU">
    <property type="method" value="EM"/>
    <property type="resolution" value="3.06 A"/>
    <property type="chains" value="V=1-415"/>
</dbReference>
<dbReference type="PDB" id="7PNV">
    <property type="method" value="EM"/>
    <property type="resolution" value="3.06 A"/>
    <property type="chains" value="V=1-415"/>
</dbReference>
<dbReference type="PDB" id="7PNW">
    <property type="method" value="EM"/>
    <property type="resolution" value="3.09 A"/>
    <property type="chains" value="V=1-415"/>
</dbReference>
<dbReference type="PDBsum" id="7PNT"/>
<dbReference type="PDBsum" id="7PNU"/>
<dbReference type="PDBsum" id="7PNV"/>
<dbReference type="PDBsum" id="7PNW"/>
<dbReference type="EMDB" id="EMD-13551"/>
<dbReference type="EMDB" id="EMD-13552"/>
<dbReference type="EMDB" id="EMD-13553"/>
<dbReference type="EMDB" id="EMD-13554"/>
<dbReference type="SMR" id="Q8BK72"/>
<dbReference type="BioGRID" id="230042">
    <property type="interactions" value="16"/>
</dbReference>
<dbReference type="ComplexPortal" id="CPX-5301">
    <property type="entry name" value="28S mitochondrial small ribosomal subunit"/>
</dbReference>
<dbReference type="FunCoup" id="Q8BK72">
    <property type="interactions" value="2844"/>
</dbReference>
<dbReference type="STRING" id="10090.ENSMUSP00000062326"/>
<dbReference type="iPTMnet" id="Q8BK72"/>
<dbReference type="PhosphoSitePlus" id="Q8BK72"/>
<dbReference type="SwissPalm" id="Q8BK72"/>
<dbReference type="jPOST" id="Q8BK72"/>
<dbReference type="PaxDb" id="10090-ENSMUSP00000062326"/>
<dbReference type="PeptideAtlas" id="Q8BK72"/>
<dbReference type="ProteomicsDB" id="260860"/>
<dbReference type="Pumba" id="Q8BK72"/>
<dbReference type="Antibodypedia" id="24192">
    <property type="antibodies" value="409 antibodies from 28 providers"/>
</dbReference>
<dbReference type="DNASU" id="218506"/>
<dbReference type="Ensembl" id="ENSMUST00000052249.7">
    <property type="protein sequence ID" value="ENSMUSP00000062326.6"/>
    <property type="gene ID" value="ENSMUSG00000041632.8"/>
</dbReference>
<dbReference type="GeneID" id="218506"/>
<dbReference type="KEGG" id="mmu:218506"/>
<dbReference type="UCSC" id="uc007rpn.1">
    <property type="organism name" value="mouse"/>
</dbReference>
<dbReference type="AGR" id="MGI:1919064"/>
<dbReference type="CTD" id="23107"/>
<dbReference type="MGI" id="MGI:1919064">
    <property type="gene designation" value="Mrps27"/>
</dbReference>
<dbReference type="VEuPathDB" id="HostDB:ENSMUSG00000041632"/>
<dbReference type="eggNOG" id="KOG4570">
    <property type="taxonomic scope" value="Eukaryota"/>
</dbReference>
<dbReference type="GeneTree" id="ENSGT00390000007246"/>
<dbReference type="HOGENOM" id="CLU_065381_0_0_1"/>
<dbReference type="InParanoid" id="Q8BK72"/>
<dbReference type="OMA" id="REDIDHA"/>
<dbReference type="OrthoDB" id="19830at2759"/>
<dbReference type="PhylomeDB" id="Q8BK72"/>
<dbReference type="TreeFam" id="TF316446"/>
<dbReference type="Reactome" id="R-MMU-5389840">
    <property type="pathway name" value="Mitochondrial translation elongation"/>
</dbReference>
<dbReference type="Reactome" id="R-MMU-5419276">
    <property type="pathway name" value="Mitochondrial translation termination"/>
</dbReference>
<dbReference type="BioGRID-ORCS" id="218506">
    <property type="hits" value="24 hits in 77 CRISPR screens"/>
</dbReference>
<dbReference type="ChiTaRS" id="Mrps27">
    <property type="organism name" value="mouse"/>
</dbReference>
<dbReference type="PRO" id="PR:Q8BK72"/>
<dbReference type="Proteomes" id="UP000000589">
    <property type="component" value="Chromosome 13"/>
</dbReference>
<dbReference type="RNAct" id="Q8BK72">
    <property type="molecule type" value="protein"/>
</dbReference>
<dbReference type="Bgee" id="ENSMUSG00000041632">
    <property type="expression patterns" value="Expressed in ear vesicle and 250 other cell types or tissues"/>
</dbReference>
<dbReference type="ExpressionAtlas" id="Q8BK72">
    <property type="expression patterns" value="baseline and differential"/>
</dbReference>
<dbReference type="GO" id="GO:0005743">
    <property type="term" value="C:mitochondrial inner membrane"/>
    <property type="evidence" value="ECO:0000303"/>
    <property type="project" value="ComplexPortal"/>
</dbReference>
<dbReference type="GO" id="GO:0005763">
    <property type="term" value="C:mitochondrial small ribosomal subunit"/>
    <property type="evidence" value="ECO:0000250"/>
    <property type="project" value="UniProtKB"/>
</dbReference>
<dbReference type="GO" id="GO:0005739">
    <property type="term" value="C:mitochondrion"/>
    <property type="evidence" value="ECO:0007005"/>
    <property type="project" value="MGI"/>
</dbReference>
<dbReference type="GO" id="GO:0005730">
    <property type="term" value="C:nucleolus"/>
    <property type="evidence" value="ECO:0007669"/>
    <property type="project" value="Ensembl"/>
</dbReference>
<dbReference type="GO" id="GO:0019843">
    <property type="term" value="F:rRNA binding"/>
    <property type="evidence" value="ECO:0000250"/>
    <property type="project" value="UniProtKB"/>
</dbReference>
<dbReference type="GO" id="GO:0000049">
    <property type="term" value="F:tRNA binding"/>
    <property type="evidence" value="ECO:0000250"/>
    <property type="project" value="UniProtKB"/>
</dbReference>
<dbReference type="GO" id="GO:0008283">
    <property type="term" value="P:cell population proliferation"/>
    <property type="evidence" value="ECO:0000250"/>
    <property type="project" value="UniProtKB"/>
</dbReference>
<dbReference type="GO" id="GO:0032543">
    <property type="term" value="P:mitochondrial translation"/>
    <property type="evidence" value="ECO:0000250"/>
    <property type="project" value="UniProtKB"/>
</dbReference>
<dbReference type="GO" id="GO:0006417">
    <property type="term" value="P:regulation of translation"/>
    <property type="evidence" value="ECO:0007669"/>
    <property type="project" value="UniProtKB-KW"/>
</dbReference>
<dbReference type="FunFam" id="1.25.40.10:FF:000232">
    <property type="entry name" value="28S ribosomal protein S27, mitochondrial"/>
    <property type="match status" value="1"/>
</dbReference>
<dbReference type="Gene3D" id="1.25.40.10">
    <property type="entry name" value="Tetratricopeptide repeat domain"/>
    <property type="match status" value="1"/>
</dbReference>
<dbReference type="InterPro" id="IPR034913">
    <property type="entry name" value="mS27/PTCD2"/>
</dbReference>
<dbReference type="InterPro" id="IPR002885">
    <property type="entry name" value="Pentatricopeptide_rpt"/>
</dbReference>
<dbReference type="InterPro" id="IPR019266">
    <property type="entry name" value="Ribosomal_mS27"/>
</dbReference>
<dbReference type="InterPro" id="IPR011990">
    <property type="entry name" value="TPR-like_helical_dom_sf"/>
</dbReference>
<dbReference type="PANTHER" id="PTHR21393">
    <property type="entry name" value="MITOCHONDRIAL 28S RIBOSOMAL PROTEIN S27"/>
    <property type="match status" value="1"/>
</dbReference>
<dbReference type="PANTHER" id="PTHR21393:SF0">
    <property type="entry name" value="SMALL RIBOSOMAL SUBUNIT PROTEIN MS27"/>
    <property type="match status" value="1"/>
</dbReference>
<dbReference type="Pfam" id="PF10037">
    <property type="entry name" value="MRP-S27"/>
    <property type="match status" value="1"/>
</dbReference>
<dbReference type="PROSITE" id="PS51375">
    <property type="entry name" value="PPR"/>
    <property type="match status" value="1"/>
</dbReference>
<organism>
    <name type="scientific">Mus musculus</name>
    <name type="common">Mouse</name>
    <dbReference type="NCBI Taxonomy" id="10090"/>
    <lineage>
        <taxon>Eukaryota</taxon>
        <taxon>Metazoa</taxon>
        <taxon>Chordata</taxon>
        <taxon>Craniata</taxon>
        <taxon>Vertebrata</taxon>
        <taxon>Euteleostomi</taxon>
        <taxon>Mammalia</taxon>
        <taxon>Eutheria</taxon>
        <taxon>Euarchontoglires</taxon>
        <taxon>Glires</taxon>
        <taxon>Rodentia</taxon>
        <taxon>Myomorpha</taxon>
        <taxon>Muroidea</taxon>
        <taxon>Muridae</taxon>
        <taxon>Murinae</taxon>
        <taxon>Mus</taxon>
        <taxon>Mus</taxon>
    </lineage>
</organism>
<comment type="function">
    <text evidence="1">RNA-binding component of the mitochondrial small ribosomal subunit (mt-SSU) that plays a role in mitochondrial protein synthesis. Stimulates mitochondrial mRNA translation of subunit components of the mitochondrial electron transport chain. Binds to the mitochondrial 12S rRNA (12S mt-rRNA) and tRNA(Glu). Overexpressed in hepatocellular carcinoma tissues compared with adjacent non-tumoral liver tissues.</text>
</comment>
<comment type="subunit">
    <text evidence="1 3">Component of the mitochondrial ribosome small subunit (28S) which comprises a 12S rRNA and about 30 distinct proteins (By similarity). Interacts with NOA1 (By similarity). Interacts with MIEF1 upstream open reading frame protein (By similarity). Interacts with METTL17 (PubMed:31487196).</text>
</comment>
<comment type="subcellular location">
    <subcellularLocation>
        <location evidence="1">Cytoplasm</location>
    </subcellularLocation>
    <subcellularLocation>
        <location evidence="1">Mitochondrion</location>
    </subcellularLocation>
</comment>
<comment type="similarity">
    <text evidence="4">Belongs to the mitochondrion-specific ribosomal protein mS27 family.</text>
</comment>